<organism>
    <name type="scientific">Heliobacterium modesticaldum (strain ATCC 51547 / Ice1)</name>
    <dbReference type="NCBI Taxonomy" id="498761"/>
    <lineage>
        <taxon>Bacteria</taxon>
        <taxon>Bacillati</taxon>
        <taxon>Bacillota</taxon>
        <taxon>Clostridia</taxon>
        <taxon>Eubacteriales</taxon>
        <taxon>Heliobacteriaceae</taxon>
        <taxon>Heliomicrobium</taxon>
    </lineage>
</organism>
<feature type="chain" id="PRO_1000186459" description="Bifunctional protein GlmU">
    <location>
        <begin position="1"/>
        <end position="458"/>
    </location>
</feature>
<feature type="region of interest" description="Pyrophosphorylase" evidence="1">
    <location>
        <begin position="1"/>
        <end position="230"/>
    </location>
</feature>
<feature type="region of interest" description="Linker" evidence="1">
    <location>
        <begin position="231"/>
        <end position="251"/>
    </location>
</feature>
<feature type="region of interest" description="N-acetyltransferase" evidence="1">
    <location>
        <begin position="252"/>
        <end position="458"/>
    </location>
</feature>
<feature type="active site" description="Proton acceptor" evidence="1">
    <location>
        <position position="363"/>
    </location>
</feature>
<feature type="binding site" evidence="1">
    <location>
        <begin position="9"/>
        <end position="12"/>
    </location>
    <ligand>
        <name>UDP-N-acetyl-alpha-D-glucosamine</name>
        <dbReference type="ChEBI" id="CHEBI:57705"/>
    </ligand>
</feature>
<feature type="binding site" evidence="1">
    <location>
        <position position="23"/>
    </location>
    <ligand>
        <name>UDP-N-acetyl-alpha-D-glucosamine</name>
        <dbReference type="ChEBI" id="CHEBI:57705"/>
    </ligand>
</feature>
<feature type="binding site" evidence="1">
    <location>
        <position position="73"/>
    </location>
    <ligand>
        <name>UDP-N-acetyl-alpha-D-glucosamine</name>
        <dbReference type="ChEBI" id="CHEBI:57705"/>
    </ligand>
</feature>
<feature type="binding site" evidence="1">
    <location>
        <begin position="78"/>
        <end position="79"/>
    </location>
    <ligand>
        <name>UDP-N-acetyl-alpha-D-glucosamine</name>
        <dbReference type="ChEBI" id="CHEBI:57705"/>
    </ligand>
</feature>
<feature type="binding site" evidence="1">
    <location>
        <position position="103"/>
    </location>
    <ligand>
        <name>Mg(2+)</name>
        <dbReference type="ChEBI" id="CHEBI:18420"/>
    </ligand>
</feature>
<feature type="binding site" evidence="1">
    <location>
        <position position="140"/>
    </location>
    <ligand>
        <name>UDP-N-acetyl-alpha-D-glucosamine</name>
        <dbReference type="ChEBI" id="CHEBI:57705"/>
    </ligand>
</feature>
<feature type="binding site" evidence="1">
    <location>
        <position position="155"/>
    </location>
    <ligand>
        <name>UDP-N-acetyl-alpha-D-glucosamine</name>
        <dbReference type="ChEBI" id="CHEBI:57705"/>
    </ligand>
</feature>
<feature type="binding site" evidence="1">
    <location>
        <position position="170"/>
    </location>
    <ligand>
        <name>UDP-N-acetyl-alpha-D-glucosamine</name>
        <dbReference type="ChEBI" id="CHEBI:57705"/>
    </ligand>
</feature>
<feature type="binding site" evidence="1">
    <location>
        <position position="228"/>
    </location>
    <ligand>
        <name>Mg(2+)</name>
        <dbReference type="ChEBI" id="CHEBI:18420"/>
    </ligand>
</feature>
<feature type="binding site" evidence="1">
    <location>
        <position position="228"/>
    </location>
    <ligand>
        <name>UDP-N-acetyl-alpha-D-glucosamine</name>
        <dbReference type="ChEBI" id="CHEBI:57705"/>
    </ligand>
</feature>
<feature type="binding site" evidence="1">
    <location>
        <position position="333"/>
    </location>
    <ligand>
        <name>UDP-N-acetyl-alpha-D-glucosamine</name>
        <dbReference type="ChEBI" id="CHEBI:57705"/>
    </ligand>
</feature>
<feature type="binding site" evidence="1">
    <location>
        <position position="351"/>
    </location>
    <ligand>
        <name>UDP-N-acetyl-alpha-D-glucosamine</name>
        <dbReference type="ChEBI" id="CHEBI:57705"/>
    </ligand>
</feature>
<feature type="binding site" evidence="1">
    <location>
        <position position="366"/>
    </location>
    <ligand>
        <name>UDP-N-acetyl-alpha-D-glucosamine</name>
        <dbReference type="ChEBI" id="CHEBI:57705"/>
    </ligand>
</feature>
<feature type="binding site" evidence="1">
    <location>
        <position position="377"/>
    </location>
    <ligand>
        <name>UDP-N-acetyl-alpha-D-glucosamine</name>
        <dbReference type="ChEBI" id="CHEBI:57705"/>
    </ligand>
</feature>
<feature type="binding site" evidence="1">
    <location>
        <position position="380"/>
    </location>
    <ligand>
        <name>acetyl-CoA</name>
        <dbReference type="ChEBI" id="CHEBI:57288"/>
    </ligand>
</feature>
<feature type="binding site" evidence="1">
    <location>
        <begin position="386"/>
        <end position="387"/>
    </location>
    <ligand>
        <name>acetyl-CoA</name>
        <dbReference type="ChEBI" id="CHEBI:57288"/>
    </ligand>
</feature>
<feature type="binding site" evidence="1">
    <location>
        <position position="405"/>
    </location>
    <ligand>
        <name>acetyl-CoA</name>
        <dbReference type="ChEBI" id="CHEBI:57288"/>
    </ligand>
</feature>
<feature type="binding site" evidence="1">
    <location>
        <position position="423"/>
    </location>
    <ligand>
        <name>acetyl-CoA</name>
        <dbReference type="ChEBI" id="CHEBI:57288"/>
    </ligand>
</feature>
<feature type="binding site" evidence="1">
    <location>
        <position position="440"/>
    </location>
    <ligand>
        <name>acetyl-CoA</name>
        <dbReference type="ChEBI" id="CHEBI:57288"/>
    </ligand>
</feature>
<protein>
    <recommendedName>
        <fullName evidence="1">Bifunctional protein GlmU</fullName>
    </recommendedName>
    <domain>
        <recommendedName>
            <fullName evidence="1">UDP-N-acetylglucosamine pyrophosphorylase</fullName>
            <ecNumber evidence="1">2.7.7.23</ecNumber>
        </recommendedName>
        <alternativeName>
            <fullName evidence="1">N-acetylglucosamine-1-phosphate uridyltransferase</fullName>
        </alternativeName>
    </domain>
    <domain>
        <recommendedName>
            <fullName evidence="1">Glucosamine-1-phosphate N-acetyltransferase</fullName>
            <ecNumber evidence="1">2.3.1.157</ecNumber>
        </recommendedName>
    </domain>
</protein>
<proteinExistence type="inferred from homology"/>
<dbReference type="EC" id="2.7.7.23" evidence="1"/>
<dbReference type="EC" id="2.3.1.157" evidence="1"/>
<dbReference type="EMBL" id="CP000930">
    <property type="protein sequence ID" value="ABZ83827.1"/>
    <property type="molecule type" value="Genomic_DNA"/>
</dbReference>
<dbReference type="RefSeq" id="WP_012282346.1">
    <property type="nucleotide sequence ID" value="NC_010337.2"/>
</dbReference>
<dbReference type="SMR" id="B0TBA0"/>
<dbReference type="STRING" id="498761.HM1_0728"/>
<dbReference type="KEGG" id="hmo:HM1_0728"/>
<dbReference type="eggNOG" id="COG1207">
    <property type="taxonomic scope" value="Bacteria"/>
</dbReference>
<dbReference type="HOGENOM" id="CLU_029499_15_2_9"/>
<dbReference type="OrthoDB" id="9775031at2"/>
<dbReference type="UniPathway" id="UPA00113">
    <property type="reaction ID" value="UER00532"/>
</dbReference>
<dbReference type="UniPathway" id="UPA00113">
    <property type="reaction ID" value="UER00533"/>
</dbReference>
<dbReference type="UniPathway" id="UPA00973"/>
<dbReference type="Proteomes" id="UP000008550">
    <property type="component" value="Chromosome"/>
</dbReference>
<dbReference type="GO" id="GO:0005737">
    <property type="term" value="C:cytoplasm"/>
    <property type="evidence" value="ECO:0007669"/>
    <property type="project" value="UniProtKB-SubCell"/>
</dbReference>
<dbReference type="GO" id="GO:0016020">
    <property type="term" value="C:membrane"/>
    <property type="evidence" value="ECO:0007669"/>
    <property type="project" value="GOC"/>
</dbReference>
<dbReference type="GO" id="GO:0019134">
    <property type="term" value="F:glucosamine-1-phosphate N-acetyltransferase activity"/>
    <property type="evidence" value="ECO:0007669"/>
    <property type="project" value="UniProtKB-UniRule"/>
</dbReference>
<dbReference type="GO" id="GO:0000287">
    <property type="term" value="F:magnesium ion binding"/>
    <property type="evidence" value="ECO:0007669"/>
    <property type="project" value="UniProtKB-UniRule"/>
</dbReference>
<dbReference type="GO" id="GO:0003977">
    <property type="term" value="F:UDP-N-acetylglucosamine diphosphorylase activity"/>
    <property type="evidence" value="ECO:0007669"/>
    <property type="project" value="UniProtKB-UniRule"/>
</dbReference>
<dbReference type="GO" id="GO:0000902">
    <property type="term" value="P:cell morphogenesis"/>
    <property type="evidence" value="ECO:0007669"/>
    <property type="project" value="UniProtKB-UniRule"/>
</dbReference>
<dbReference type="GO" id="GO:0071555">
    <property type="term" value="P:cell wall organization"/>
    <property type="evidence" value="ECO:0007669"/>
    <property type="project" value="UniProtKB-KW"/>
</dbReference>
<dbReference type="GO" id="GO:0009245">
    <property type="term" value="P:lipid A biosynthetic process"/>
    <property type="evidence" value="ECO:0007669"/>
    <property type="project" value="UniProtKB-UniRule"/>
</dbReference>
<dbReference type="GO" id="GO:0009252">
    <property type="term" value="P:peptidoglycan biosynthetic process"/>
    <property type="evidence" value="ECO:0007669"/>
    <property type="project" value="UniProtKB-UniRule"/>
</dbReference>
<dbReference type="GO" id="GO:0008360">
    <property type="term" value="P:regulation of cell shape"/>
    <property type="evidence" value="ECO:0007669"/>
    <property type="project" value="UniProtKB-KW"/>
</dbReference>
<dbReference type="GO" id="GO:0006048">
    <property type="term" value="P:UDP-N-acetylglucosamine biosynthetic process"/>
    <property type="evidence" value="ECO:0007669"/>
    <property type="project" value="UniProtKB-UniPathway"/>
</dbReference>
<dbReference type="CDD" id="cd02540">
    <property type="entry name" value="GT2_GlmU_N_bac"/>
    <property type="match status" value="1"/>
</dbReference>
<dbReference type="CDD" id="cd03353">
    <property type="entry name" value="LbH_GlmU_C"/>
    <property type="match status" value="1"/>
</dbReference>
<dbReference type="Gene3D" id="2.160.10.10">
    <property type="entry name" value="Hexapeptide repeat proteins"/>
    <property type="match status" value="1"/>
</dbReference>
<dbReference type="Gene3D" id="3.90.550.10">
    <property type="entry name" value="Spore Coat Polysaccharide Biosynthesis Protein SpsA, Chain A"/>
    <property type="match status" value="1"/>
</dbReference>
<dbReference type="HAMAP" id="MF_01631">
    <property type="entry name" value="GlmU"/>
    <property type="match status" value="1"/>
</dbReference>
<dbReference type="InterPro" id="IPR005882">
    <property type="entry name" value="Bifunctional_GlmU"/>
</dbReference>
<dbReference type="InterPro" id="IPR050065">
    <property type="entry name" value="GlmU-like"/>
</dbReference>
<dbReference type="InterPro" id="IPR038009">
    <property type="entry name" value="GlmU_C_LbH"/>
</dbReference>
<dbReference type="InterPro" id="IPR001451">
    <property type="entry name" value="Hexapep"/>
</dbReference>
<dbReference type="InterPro" id="IPR018357">
    <property type="entry name" value="Hexapep_transf_CS"/>
</dbReference>
<dbReference type="InterPro" id="IPR025877">
    <property type="entry name" value="MobA-like_NTP_Trfase"/>
</dbReference>
<dbReference type="InterPro" id="IPR029044">
    <property type="entry name" value="Nucleotide-diphossugar_trans"/>
</dbReference>
<dbReference type="InterPro" id="IPR011004">
    <property type="entry name" value="Trimer_LpxA-like_sf"/>
</dbReference>
<dbReference type="NCBIfam" id="TIGR01173">
    <property type="entry name" value="glmU"/>
    <property type="match status" value="1"/>
</dbReference>
<dbReference type="NCBIfam" id="NF010934">
    <property type="entry name" value="PRK14354.1"/>
    <property type="match status" value="1"/>
</dbReference>
<dbReference type="PANTHER" id="PTHR43584:SF3">
    <property type="entry name" value="BIFUNCTIONAL PROTEIN GLMU"/>
    <property type="match status" value="1"/>
</dbReference>
<dbReference type="PANTHER" id="PTHR43584">
    <property type="entry name" value="NUCLEOTIDYL TRANSFERASE"/>
    <property type="match status" value="1"/>
</dbReference>
<dbReference type="Pfam" id="PF00132">
    <property type="entry name" value="Hexapep"/>
    <property type="match status" value="1"/>
</dbReference>
<dbReference type="Pfam" id="PF12804">
    <property type="entry name" value="NTP_transf_3"/>
    <property type="match status" value="1"/>
</dbReference>
<dbReference type="SUPFAM" id="SSF53448">
    <property type="entry name" value="Nucleotide-diphospho-sugar transferases"/>
    <property type="match status" value="1"/>
</dbReference>
<dbReference type="SUPFAM" id="SSF51161">
    <property type="entry name" value="Trimeric LpxA-like enzymes"/>
    <property type="match status" value="1"/>
</dbReference>
<dbReference type="PROSITE" id="PS00101">
    <property type="entry name" value="HEXAPEP_TRANSFERASES"/>
    <property type="match status" value="1"/>
</dbReference>
<name>GLMU_HELMI</name>
<keyword id="KW-0012">Acyltransferase</keyword>
<keyword id="KW-0133">Cell shape</keyword>
<keyword id="KW-0961">Cell wall biogenesis/degradation</keyword>
<keyword id="KW-0963">Cytoplasm</keyword>
<keyword id="KW-0460">Magnesium</keyword>
<keyword id="KW-0479">Metal-binding</keyword>
<keyword id="KW-0511">Multifunctional enzyme</keyword>
<keyword id="KW-0548">Nucleotidyltransferase</keyword>
<keyword id="KW-0573">Peptidoglycan synthesis</keyword>
<keyword id="KW-1185">Reference proteome</keyword>
<keyword id="KW-0677">Repeat</keyword>
<keyword id="KW-0808">Transferase</keyword>
<comment type="function">
    <text evidence="1">Catalyzes the last two sequential reactions in the de novo biosynthetic pathway for UDP-N-acetylglucosamine (UDP-GlcNAc). The C-terminal domain catalyzes the transfer of acetyl group from acetyl coenzyme A to glucosamine-1-phosphate (GlcN-1-P) to produce N-acetylglucosamine-1-phosphate (GlcNAc-1-P), which is converted into UDP-GlcNAc by the transfer of uridine 5-monophosphate (from uridine 5-triphosphate), a reaction catalyzed by the N-terminal domain.</text>
</comment>
<comment type="catalytic activity">
    <reaction evidence="1">
        <text>alpha-D-glucosamine 1-phosphate + acetyl-CoA = N-acetyl-alpha-D-glucosamine 1-phosphate + CoA + H(+)</text>
        <dbReference type="Rhea" id="RHEA:13725"/>
        <dbReference type="ChEBI" id="CHEBI:15378"/>
        <dbReference type="ChEBI" id="CHEBI:57287"/>
        <dbReference type="ChEBI" id="CHEBI:57288"/>
        <dbReference type="ChEBI" id="CHEBI:57776"/>
        <dbReference type="ChEBI" id="CHEBI:58516"/>
        <dbReference type="EC" id="2.3.1.157"/>
    </reaction>
</comment>
<comment type="catalytic activity">
    <reaction evidence="1">
        <text>N-acetyl-alpha-D-glucosamine 1-phosphate + UTP + H(+) = UDP-N-acetyl-alpha-D-glucosamine + diphosphate</text>
        <dbReference type="Rhea" id="RHEA:13509"/>
        <dbReference type="ChEBI" id="CHEBI:15378"/>
        <dbReference type="ChEBI" id="CHEBI:33019"/>
        <dbReference type="ChEBI" id="CHEBI:46398"/>
        <dbReference type="ChEBI" id="CHEBI:57705"/>
        <dbReference type="ChEBI" id="CHEBI:57776"/>
        <dbReference type="EC" id="2.7.7.23"/>
    </reaction>
</comment>
<comment type="cofactor">
    <cofactor evidence="1">
        <name>Mg(2+)</name>
        <dbReference type="ChEBI" id="CHEBI:18420"/>
    </cofactor>
    <text evidence="1">Binds 1 Mg(2+) ion per subunit.</text>
</comment>
<comment type="pathway">
    <text evidence="1">Nucleotide-sugar biosynthesis; UDP-N-acetyl-alpha-D-glucosamine biosynthesis; N-acetyl-alpha-D-glucosamine 1-phosphate from alpha-D-glucosamine 6-phosphate (route II): step 2/2.</text>
</comment>
<comment type="pathway">
    <text evidence="1">Nucleotide-sugar biosynthesis; UDP-N-acetyl-alpha-D-glucosamine biosynthesis; UDP-N-acetyl-alpha-D-glucosamine from N-acetyl-alpha-D-glucosamine 1-phosphate: step 1/1.</text>
</comment>
<comment type="pathway">
    <text evidence="1">Bacterial outer membrane biogenesis; LPS lipid A biosynthesis.</text>
</comment>
<comment type="subunit">
    <text evidence="1">Homotrimer.</text>
</comment>
<comment type="subcellular location">
    <subcellularLocation>
        <location evidence="1">Cytoplasm</location>
    </subcellularLocation>
</comment>
<comment type="similarity">
    <text evidence="1">In the N-terminal section; belongs to the N-acetylglucosamine-1-phosphate uridyltransferase family.</text>
</comment>
<comment type="similarity">
    <text evidence="1">In the C-terminal section; belongs to the transferase hexapeptide repeat family.</text>
</comment>
<accession>B0TBA0</accession>
<evidence type="ECO:0000255" key="1">
    <source>
        <dbReference type="HAMAP-Rule" id="MF_01631"/>
    </source>
</evidence>
<gene>
    <name evidence="1" type="primary">glmU</name>
    <name type="ordered locus">Helmi_12020</name>
    <name type="ORF">HM1_0728</name>
</gene>
<reference key="1">
    <citation type="journal article" date="2008" name="J. Bacteriol.">
        <title>The genome of Heliobacterium modesticaldum, a phototrophic representative of the Firmicutes containing the simplest photosynthetic apparatus.</title>
        <authorList>
            <person name="Sattley W.M."/>
            <person name="Madigan M.T."/>
            <person name="Swingley W.D."/>
            <person name="Cheung P.C."/>
            <person name="Clocksin K.M."/>
            <person name="Conrad A.L."/>
            <person name="Dejesa L.C."/>
            <person name="Honchak B.M."/>
            <person name="Jung D.O."/>
            <person name="Karbach L.E."/>
            <person name="Kurdoglu A."/>
            <person name="Lahiri S."/>
            <person name="Mastrian S.D."/>
            <person name="Page L.E."/>
            <person name="Taylor H.L."/>
            <person name="Wang Z.T."/>
            <person name="Raymond J."/>
            <person name="Chen M."/>
            <person name="Blankenship R.E."/>
            <person name="Touchman J.W."/>
        </authorList>
    </citation>
    <scope>NUCLEOTIDE SEQUENCE [LARGE SCALE GENOMIC DNA]</scope>
    <source>
        <strain>ATCC 51547 / Ice1</strain>
    </source>
</reference>
<sequence length="458" mass="48926">MHKRTAVVLAAGKGTRMKSRQPKVLHEVAGQPMICHVLDALTDCGVAQPIVVIGHGGEAVRQRLGDRACYAWQQEQLGTGHAVMMARPEVPEEVETVMVLCGDTPLLTGATLSALWETHEQSGAMGTVLTAVIDDPKGYGRILRDDAGHVTAIVEEKDADEKQKTIREINAGTYCFDRAALFAALDAITPANAQGEYYLTDVLAIFRQRGGLVVAHTLQDEREILGINSRVQLAEAEAVLQDRLRRKWMDAGVTLIDPPSVFFHTKAVVGADTIIYPQTIIEGETVIGEGCRIGPATRICDSRIGENVVIQNSVVLDSRIGDDCAVGPFAYLRPGTCLAEAVKVGDFVEIKKSVIGKGSKVPHLSYVGDATVGEDVNIGAGTITCNYDGKHKHVTAIEDGAFIGSNTNLVAPVTVGAHALIGAGSTITKDVPAGALAVERSRMKIKENFLGRKHKGSQ</sequence>